<reference key="1">
    <citation type="journal article" date="1990" name="Virology">
        <title>Molecular cloning and comparative sequence analyses of bluetongue virus S1 segments by selective synthesis of specific full-length DNA copies of dsRNA genes.</title>
        <authorList>
            <person name="Kowalik T.F."/>
            <person name="Yang Y.Y."/>
            <person name="Li J.K.-K."/>
        </authorList>
    </citation>
    <scope>NUCLEOTIDE SEQUENCE [GENOMIC RNA]</scope>
</reference>
<name>VP7_BTV11</name>
<feature type="chain" id="PRO_0000222733" description="Core protein VP7">
    <location>
        <begin position="1"/>
        <end position="349"/>
    </location>
</feature>
<feature type="glycosylation site" description="N-linked (GlcNAc...) asparagine; by host" evidence="2">
    <location>
        <position position="287"/>
    </location>
</feature>
<keyword id="KW-0167">Capsid protein</keyword>
<keyword id="KW-0325">Glycoprotein</keyword>
<keyword id="KW-1152">Outer capsid protein</keyword>
<keyword id="KW-0946">Virion</keyword>
<proteinExistence type="inferred from homology"/>
<organism>
    <name type="scientific">Bluetongue virus 11 (isolate USA)</name>
    <name type="common">BTV 11</name>
    <dbReference type="NCBI Taxonomy" id="33716"/>
    <lineage>
        <taxon>Viruses</taxon>
        <taxon>Riboviria</taxon>
        <taxon>Orthornavirae</taxon>
        <taxon>Duplornaviricota</taxon>
        <taxon>Resentoviricetes</taxon>
        <taxon>Reovirales</taxon>
        <taxon>Sedoreoviridae</taxon>
        <taxon>Orbivirus</taxon>
        <taxon>Bluetongue virus</taxon>
    </lineage>
</organism>
<evidence type="ECO:0000250" key="1"/>
<evidence type="ECO:0000255" key="2"/>
<evidence type="ECO:0000305" key="3"/>
<protein>
    <recommendedName>
        <fullName>Core protein VP7</fullName>
    </recommendedName>
</protein>
<dbReference type="EMBL" id="M32102">
    <property type="protein sequence ID" value="AAA42853.1"/>
    <property type="molecule type" value="Genomic_RNA"/>
</dbReference>
<dbReference type="PIR" id="A28537">
    <property type="entry name" value="P7XR10"/>
</dbReference>
<dbReference type="RefSeq" id="YP_052967.1">
    <property type="nucleotide sequence ID" value="NC_006022.1"/>
</dbReference>
<dbReference type="SMR" id="P69362"/>
<dbReference type="GlyCosmos" id="P69362">
    <property type="glycosylation" value="1 site, No reported glycans"/>
</dbReference>
<dbReference type="KEGG" id="vg:2943155"/>
<dbReference type="GO" id="GO:0019031">
    <property type="term" value="C:viral envelope"/>
    <property type="evidence" value="ECO:0007669"/>
    <property type="project" value="InterPro"/>
</dbReference>
<dbReference type="GO" id="GO:0039624">
    <property type="term" value="C:viral outer capsid"/>
    <property type="evidence" value="ECO:0007669"/>
    <property type="project" value="UniProtKB-KW"/>
</dbReference>
<dbReference type="GO" id="GO:0046789">
    <property type="term" value="F:host cell surface receptor binding"/>
    <property type="evidence" value="ECO:0007669"/>
    <property type="project" value="InterPro"/>
</dbReference>
<dbReference type="GO" id="GO:0005198">
    <property type="term" value="F:structural molecule activity"/>
    <property type="evidence" value="ECO:0007669"/>
    <property type="project" value="InterPro"/>
</dbReference>
<dbReference type="GO" id="GO:0019064">
    <property type="term" value="P:fusion of virus membrane with host plasma membrane"/>
    <property type="evidence" value="ECO:0007669"/>
    <property type="project" value="InterPro"/>
</dbReference>
<dbReference type="Gene3D" id="2.60.120.170">
    <property type="match status" value="1"/>
</dbReference>
<dbReference type="Gene3D" id="1.10.250.10">
    <property type="entry name" value="Bluetongue Virus 10, subunit 1, domain 1"/>
    <property type="match status" value="1"/>
</dbReference>
<dbReference type="Gene3D" id="1.10.170.10">
    <property type="entry name" value="Bluetongue Virus 10, subunit 1, domain 3"/>
    <property type="match status" value="1"/>
</dbReference>
<dbReference type="InterPro" id="IPR008980">
    <property type="entry name" value="Capsid_hemagglutn"/>
</dbReference>
<dbReference type="InterPro" id="IPR001803">
    <property type="entry name" value="Orbi_VP7_capsid"/>
</dbReference>
<dbReference type="InterPro" id="IPR023178">
    <property type="entry name" value="Orbi_VP7_capsid_C"/>
</dbReference>
<dbReference type="InterPro" id="IPR023176">
    <property type="entry name" value="Orbi_VP7_capsid_N"/>
</dbReference>
<dbReference type="InterPro" id="IPR008935">
    <property type="entry name" value="Virus_capsid_a-hlx_vir"/>
</dbReference>
<dbReference type="Pfam" id="PF00897">
    <property type="entry name" value="Orbi_VP7"/>
    <property type="match status" value="1"/>
</dbReference>
<dbReference type="PRINTS" id="PR00903">
    <property type="entry name" value="VP7CAPSID"/>
</dbReference>
<dbReference type="SUPFAM" id="SSF48345">
    <property type="entry name" value="A virus capsid protein alpha-helical domain"/>
    <property type="match status" value="1"/>
</dbReference>
<dbReference type="SUPFAM" id="SSF49818">
    <property type="entry name" value="Viral protein domain"/>
    <property type="match status" value="1"/>
</dbReference>
<organismHost>
    <name type="scientific">Antilocapra americana</name>
    <name type="common">Pronghorn</name>
    <dbReference type="NCBI Taxonomy" id="9891"/>
</organismHost>
<organismHost>
    <name type="scientific">Bos taurus</name>
    <name type="common">Bovine</name>
    <dbReference type="NCBI Taxonomy" id="9913"/>
</organismHost>
<organismHost>
    <name type="scientific">Capra hircus</name>
    <name type="common">Goat</name>
    <dbReference type="NCBI Taxonomy" id="9925"/>
</organismHost>
<organismHost>
    <name type="scientific">Culicoides variipennis</name>
    <name type="common">Biting midge</name>
    <dbReference type="NCBI Taxonomy" id="46212"/>
</organismHost>
<organismHost>
    <name type="scientific">Ovis aries</name>
    <name type="common">Sheep</name>
    <dbReference type="NCBI Taxonomy" id="9940"/>
</organismHost>
<gene>
    <name type="primary">Segment-7</name>
</gene>
<sequence>MDTIAARALTVMRACATLQEARIVLEANVMEILGIAINRYNGLTLRGVTMRPTSLAQRNEMFFMCLDMMLSAAGINVGPISPDYTQHMATIGVLATPEIPFTTEAANEIARVTGETSTWGPARQPYGFFLETEETFQPGRWFMRAAQAVTAVVCGPDMIQVSLNAGARGDVQQIFQGRNDPMMIYLVWRRIENFAMAQGNSQQTQAGVTVSVGGVDMRAGRIIAWDGQAALHVHNPTQQNAMVQIQVVFYISMDKTLNQYPALTAEIFNVYSFRDHTWHGLRTAILNRTTLPNMLPPIFPPNDRDSILTLLLLSTLADVYTVLRPEFAIHGVNPMPGPLTRAIARAAYV</sequence>
<comment type="function">
    <text>The VP7 protein is one of the five proteins (with VP1, VP3, VP4, and VP6) which form the inner capsid of the virus.</text>
</comment>
<comment type="subunit">
    <text evidence="1">Homotrimer that assemble in a complex of 260 capsomers on an inner scaffold composed of VP3.</text>
</comment>
<comment type="subcellular location">
    <subcellularLocation>
        <location evidence="3">Virion</location>
    </subcellularLocation>
</comment>
<comment type="similarity">
    <text evidence="3">Belongs to the orbivirus VP7 family.</text>
</comment>
<accession>P69362</accession>
<accession>P07886</accession>